<comment type="function">
    <text evidence="1">Catalyzes the condensation of iminoaspartate with dihydroxyacetone phosphate to form quinolinate.</text>
</comment>
<comment type="catalytic activity">
    <reaction evidence="1">
        <text>iminosuccinate + dihydroxyacetone phosphate = quinolinate + phosphate + 2 H2O + H(+)</text>
        <dbReference type="Rhea" id="RHEA:25888"/>
        <dbReference type="ChEBI" id="CHEBI:15377"/>
        <dbReference type="ChEBI" id="CHEBI:15378"/>
        <dbReference type="ChEBI" id="CHEBI:29959"/>
        <dbReference type="ChEBI" id="CHEBI:43474"/>
        <dbReference type="ChEBI" id="CHEBI:57642"/>
        <dbReference type="ChEBI" id="CHEBI:77875"/>
        <dbReference type="EC" id="2.5.1.72"/>
    </reaction>
    <physiologicalReaction direction="left-to-right" evidence="1">
        <dbReference type="Rhea" id="RHEA:25889"/>
    </physiologicalReaction>
</comment>
<comment type="cofactor">
    <cofactor evidence="1">
        <name>[4Fe-4S] cluster</name>
        <dbReference type="ChEBI" id="CHEBI:49883"/>
    </cofactor>
    <text evidence="1">Binds 1 [4Fe-4S] cluster per subunit.</text>
</comment>
<comment type="pathway">
    <text evidence="1">Cofactor biosynthesis; NAD(+) biosynthesis; quinolinate from iminoaspartate: step 1/1.</text>
</comment>
<comment type="subcellular location">
    <subcellularLocation>
        <location evidence="1">Cytoplasm</location>
    </subcellularLocation>
</comment>
<comment type="similarity">
    <text evidence="1">Belongs to the quinolinate synthase family. Type 1 subfamily.</text>
</comment>
<gene>
    <name evidence="1" type="primary">nadA</name>
    <name type="ordered locus">SEN0701</name>
</gene>
<reference key="1">
    <citation type="journal article" date="2008" name="Genome Res.">
        <title>Comparative genome analysis of Salmonella enteritidis PT4 and Salmonella gallinarum 287/91 provides insights into evolutionary and host adaptation pathways.</title>
        <authorList>
            <person name="Thomson N.R."/>
            <person name="Clayton D.J."/>
            <person name="Windhorst D."/>
            <person name="Vernikos G."/>
            <person name="Davidson S."/>
            <person name="Churcher C."/>
            <person name="Quail M.A."/>
            <person name="Stevens M."/>
            <person name="Jones M.A."/>
            <person name="Watson M."/>
            <person name="Barron A."/>
            <person name="Layton A."/>
            <person name="Pickard D."/>
            <person name="Kingsley R.A."/>
            <person name="Bignell A."/>
            <person name="Clark L."/>
            <person name="Harris B."/>
            <person name="Ormond D."/>
            <person name="Abdellah Z."/>
            <person name="Brooks K."/>
            <person name="Cherevach I."/>
            <person name="Chillingworth T."/>
            <person name="Woodward J."/>
            <person name="Norberczak H."/>
            <person name="Lord A."/>
            <person name="Arrowsmith C."/>
            <person name="Jagels K."/>
            <person name="Moule S."/>
            <person name="Mungall K."/>
            <person name="Saunders M."/>
            <person name="Whitehead S."/>
            <person name="Chabalgoity J.A."/>
            <person name="Maskell D."/>
            <person name="Humphreys T."/>
            <person name="Roberts M."/>
            <person name="Barrow P.A."/>
            <person name="Dougan G."/>
            <person name="Parkhill J."/>
        </authorList>
    </citation>
    <scope>NUCLEOTIDE SEQUENCE [LARGE SCALE GENOMIC DNA]</scope>
    <source>
        <strain>P125109</strain>
    </source>
</reference>
<sequence length="347" mass="37975">MSVMFDPQAAIYPFPPKPTPLNDDEKQFYREKIKRLLKERNAVMVAHYYTDPEIQQLAEETGGCISDSLEMARFGAKHAASTLLVAGVRFMGETAKILSPEKNILMPTLAAECSLDLGCPIDEFSAFCDAHPDRTVVVYANTSAAVKARADWVVTSSIAVELIEHLDSLGEKIIWAPDRHLGNYVQKQTGADVLCWQGACIVHDEFKTQALTRLKKIYPYAALLVHPESPQSIVEMADAVGSTSQLIKAAKTLPHRQLIVATDRGIFYKMQQAVPEKELLEAPTAGEGATCRSCAHCPWMAMNGLKAIAEGLEQGGAAHEIQVDAALREGALLPLNRMLDFAATLRA</sequence>
<protein>
    <recommendedName>
        <fullName evidence="1">Quinolinate synthase</fullName>
        <ecNumber evidence="1">2.5.1.72</ecNumber>
    </recommendedName>
</protein>
<proteinExistence type="inferred from homology"/>
<dbReference type="EC" id="2.5.1.72" evidence="1"/>
<dbReference type="EMBL" id="AM933172">
    <property type="protein sequence ID" value="CAR32287.1"/>
    <property type="molecule type" value="Genomic_DNA"/>
</dbReference>
<dbReference type="RefSeq" id="WP_000115336.1">
    <property type="nucleotide sequence ID" value="NC_011294.1"/>
</dbReference>
<dbReference type="SMR" id="B5QX27"/>
<dbReference type="KEGG" id="set:SEN0701"/>
<dbReference type="HOGENOM" id="CLU_047382_1_0_6"/>
<dbReference type="UniPathway" id="UPA00253">
    <property type="reaction ID" value="UER00327"/>
</dbReference>
<dbReference type="Proteomes" id="UP000000613">
    <property type="component" value="Chromosome"/>
</dbReference>
<dbReference type="GO" id="GO:0005829">
    <property type="term" value="C:cytosol"/>
    <property type="evidence" value="ECO:0007669"/>
    <property type="project" value="TreeGrafter"/>
</dbReference>
<dbReference type="GO" id="GO:0051539">
    <property type="term" value="F:4 iron, 4 sulfur cluster binding"/>
    <property type="evidence" value="ECO:0007669"/>
    <property type="project" value="UniProtKB-KW"/>
</dbReference>
<dbReference type="GO" id="GO:0046872">
    <property type="term" value="F:metal ion binding"/>
    <property type="evidence" value="ECO:0007669"/>
    <property type="project" value="UniProtKB-KW"/>
</dbReference>
<dbReference type="GO" id="GO:0008987">
    <property type="term" value="F:quinolinate synthetase A activity"/>
    <property type="evidence" value="ECO:0007669"/>
    <property type="project" value="UniProtKB-UniRule"/>
</dbReference>
<dbReference type="GO" id="GO:0034628">
    <property type="term" value="P:'de novo' NAD biosynthetic process from L-aspartate"/>
    <property type="evidence" value="ECO:0007669"/>
    <property type="project" value="TreeGrafter"/>
</dbReference>
<dbReference type="FunFam" id="3.40.50.10800:FF:000003">
    <property type="entry name" value="Quinolinate synthase A"/>
    <property type="match status" value="1"/>
</dbReference>
<dbReference type="Gene3D" id="3.40.50.10800">
    <property type="entry name" value="NadA-like"/>
    <property type="match status" value="3"/>
</dbReference>
<dbReference type="HAMAP" id="MF_00567">
    <property type="entry name" value="NadA_type1"/>
    <property type="match status" value="1"/>
</dbReference>
<dbReference type="InterPro" id="IPR003473">
    <property type="entry name" value="NadA"/>
</dbReference>
<dbReference type="InterPro" id="IPR036094">
    <property type="entry name" value="NadA_sf"/>
</dbReference>
<dbReference type="InterPro" id="IPR023513">
    <property type="entry name" value="Quinolinate_synth_A_type1"/>
</dbReference>
<dbReference type="NCBIfam" id="TIGR00550">
    <property type="entry name" value="nadA"/>
    <property type="match status" value="1"/>
</dbReference>
<dbReference type="NCBIfam" id="NF006877">
    <property type="entry name" value="PRK09375.1-1"/>
    <property type="match status" value="1"/>
</dbReference>
<dbReference type="NCBIfam" id="NF006878">
    <property type="entry name" value="PRK09375.1-2"/>
    <property type="match status" value="1"/>
</dbReference>
<dbReference type="PANTHER" id="PTHR30573:SF0">
    <property type="entry name" value="QUINOLINATE SYNTHASE, CHLOROPLASTIC"/>
    <property type="match status" value="1"/>
</dbReference>
<dbReference type="PANTHER" id="PTHR30573">
    <property type="entry name" value="QUINOLINATE SYNTHETASE A"/>
    <property type="match status" value="1"/>
</dbReference>
<dbReference type="Pfam" id="PF02445">
    <property type="entry name" value="NadA"/>
    <property type="match status" value="1"/>
</dbReference>
<dbReference type="SUPFAM" id="SSF142754">
    <property type="entry name" value="NadA-like"/>
    <property type="match status" value="1"/>
</dbReference>
<accession>B5QX27</accession>
<keyword id="KW-0004">4Fe-4S</keyword>
<keyword id="KW-0963">Cytoplasm</keyword>
<keyword id="KW-0408">Iron</keyword>
<keyword id="KW-0411">Iron-sulfur</keyword>
<keyword id="KW-0479">Metal-binding</keyword>
<keyword id="KW-0662">Pyridine nucleotide biosynthesis</keyword>
<keyword id="KW-0808">Transferase</keyword>
<organism>
    <name type="scientific">Salmonella enteritidis PT4 (strain P125109)</name>
    <dbReference type="NCBI Taxonomy" id="550537"/>
    <lineage>
        <taxon>Bacteria</taxon>
        <taxon>Pseudomonadati</taxon>
        <taxon>Pseudomonadota</taxon>
        <taxon>Gammaproteobacteria</taxon>
        <taxon>Enterobacterales</taxon>
        <taxon>Enterobacteriaceae</taxon>
        <taxon>Salmonella</taxon>
    </lineage>
</organism>
<evidence type="ECO:0000255" key="1">
    <source>
        <dbReference type="HAMAP-Rule" id="MF_00567"/>
    </source>
</evidence>
<feature type="chain" id="PRO_1000129423" description="Quinolinate synthase">
    <location>
        <begin position="1"/>
        <end position="347"/>
    </location>
</feature>
<feature type="binding site" evidence="1">
    <location>
        <position position="47"/>
    </location>
    <ligand>
        <name>iminosuccinate</name>
        <dbReference type="ChEBI" id="CHEBI:77875"/>
    </ligand>
</feature>
<feature type="binding site" evidence="1">
    <location>
        <position position="68"/>
    </location>
    <ligand>
        <name>iminosuccinate</name>
        <dbReference type="ChEBI" id="CHEBI:77875"/>
    </ligand>
</feature>
<feature type="binding site" evidence="1">
    <location>
        <position position="113"/>
    </location>
    <ligand>
        <name>[4Fe-4S] cluster</name>
        <dbReference type="ChEBI" id="CHEBI:49883"/>
    </ligand>
</feature>
<feature type="binding site" evidence="1">
    <location>
        <begin position="139"/>
        <end position="141"/>
    </location>
    <ligand>
        <name>iminosuccinate</name>
        <dbReference type="ChEBI" id="CHEBI:77875"/>
    </ligand>
</feature>
<feature type="binding site" evidence="1">
    <location>
        <position position="156"/>
    </location>
    <ligand>
        <name>iminosuccinate</name>
        <dbReference type="ChEBI" id="CHEBI:77875"/>
    </ligand>
</feature>
<feature type="binding site" evidence="1">
    <location>
        <position position="200"/>
    </location>
    <ligand>
        <name>[4Fe-4S] cluster</name>
        <dbReference type="ChEBI" id="CHEBI:49883"/>
    </ligand>
</feature>
<feature type="binding site" evidence="1">
    <location>
        <begin position="226"/>
        <end position="228"/>
    </location>
    <ligand>
        <name>iminosuccinate</name>
        <dbReference type="ChEBI" id="CHEBI:77875"/>
    </ligand>
</feature>
<feature type="binding site" evidence="1">
    <location>
        <position position="243"/>
    </location>
    <ligand>
        <name>iminosuccinate</name>
        <dbReference type="ChEBI" id="CHEBI:77875"/>
    </ligand>
</feature>
<feature type="binding site" evidence="1">
    <location>
        <position position="297"/>
    </location>
    <ligand>
        <name>[4Fe-4S] cluster</name>
        <dbReference type="ChEBI" id="CHEBI:49883"/>
    </ligand>
</feature>
<name>NADA_SALEP</name>